<name>Y2305_STAAM</name>
<feature type="chain" id="PRO_0000312184" description="Putative 2-hydroxyacid dehydrogenase SAV2305">
    <location>
        <begin position="1"/>
        <end position="317"/>
    </location>
</feature>
<feature type="active site" evidence="1">
    <location>
        <position position="236"/>
    </location>
</feature>
<feature type="active site" evidence="1">
    <location>
        <position position="265"/>
    </location>
</feature>
<feature type="active site" description="Proton donor" evidence="1">
    <location>
        <position position="283"/>
    </location>
</feature>
<feature type="binding site" evidence="1">
    <location>
        <begin position="155"/>
        <end position="156"/>
    </location>
    <ligand>
        <name>NAD(+)</name>
        <dbReference type="ChEBI" id="CHEBI:57540"/>
    </ligand>
</feature>
<feature type="binding site" evidence="1">
    <location>
        <begin position="234"/>
        <end position="236"/>
    </location>
    <ligand>
        <name>NAD(+)</name>
        <dbReference type="ChEBI" id="CHEBI:57540"/>
    </ligand>
</feature>
<feature type="binding site" evidence="1">
    <location>
        <position position="260"/>
    </location>
    <ligand>
        <name>NAD(+)</name>
        <dbReference type="ChEBI" id="CHEBI:57540"/>
    </ligand>
</feature>
<feature type="binding site" evidence="1">
    <location>
        <begin position="283"/>
        <end position="286"/>
    </location>
    <ligand>
        <name>NAD(+)</name>
        <dbReference type="ChEBI" id="CHEBI:57540"/>
    </ligand>
</feature>
<protein>
    <recommendedName>
        <fullName>Putative 2-hydroxyacid dehydrogenase SAV2305</fullName>
        <ecNumber>1.1.1.-</ecNumber>
    </recommendedName>
</protein>
<evidence type="ECO:0000250" key="1"/>
<evidence type="ECO:0000305" key="2"/>
<accession>Q99RW8</accession>
<dbReference type="EC" id="1.1.1.-"/>
<dbReference type="EMBL" id="BA000017">
    <property type="protein sequence ID" value="BAB58467.1"/>
    <property type="molecule type" value="Genomic_DNA"/>
</dbReference>
<dbReference type="RefSeq" id="WP_000417018.1">
    <property type="nucleotide sequence ID" value="NC_002758.2"/>
</dbReference>
<dbReference type="SMR" id="Q99RW8"/>
<dbReference type="KEGG" id="sav:SAV2305"/>
<dbReference type="HOGENOM" id="CLU_019796_1_2_9"/>
<dbReference type="PhylomeDB" id="Q99RW8"/>
<dbReference type="Proteomes" id="UP000002481">
    <property type="component" value="Chromosome"/>
</dbReference>
<dbReference type="GO" id="GO:0051287">
    <property type="term" value="F:NAD binding"/>
    <property type="evidence" value="ECO:0007669"/>
    <property type="project" value="InterPro"/>
</dbReference>
<dbReference type="GO" id="GO:0016616">
    <property type="term" value="F:oxidoreductase activity, acting on the CH-OH group of donors, NAD or NADP as acceptor"/>
    <property type="evidence" value="ECO:0007669"/>
    <property type="project" value="InterPro"/>
</dbReference>
<dbReference type="CDD" id="cd12178">
    <property type="entry name" value="2-Hacid_dh_13"/>
    <property type="match status" value="1"/>
</dbReference>
<dbReference type="FunFam" id="3.40.50.720:FF:000462">
    <property type="entry name" value="Glyoxylate reductase (NADP+)"/>
    <property type="match status" value="1"/>
</dbReference>
<dbReference type="Gene3D" id="3.40.50.720">
    <property type="entry name" value="NAD(P)-binding Rossmann-like Domain"/>
    <property type="match status" value="2"/>
</dbReference>
<dbReference type="InterPro" id="IPR050857">
    <property type="entry name" value="D-2-hydroxyacid_DH"/>
</dbReference>
<dbReference type="InterPro" id="IPR006139">
    <property type="entry name" value="D-isomer_2_OHA_DH_cat_dom"/>
</dbReference>
<dbReference type="InterPro" id="IPR006140">
    <property type="entry name" value="D-isomer_DH_NAD-bd"/>
</dbReference>
<dbReference type="InterPro" id="IPR036291">
    <property type="entry name" value="NAD(P)-bd_dom_sf"/>
</dbReference>
<dbReference type="PANTHER" id="PTHR42789">
    <property type="entry name" value="D-ISOMER SPECIFIC 2-HYDROXYACID DEHYDROGENASE FAMILY PROTEIN (AFU_ORTHOLOGUE AFUA_6G10090)"/>
    <property type="match status" value="1"/>
</dbReference>
<dbReference type="PANTHER" id="PTHR42789:SF1">
    <property type="entry name" value="D-ISOMER SPECIFIC 2-HYDROXYACID DEHYDROGENASE FAMILY PROTEIN (AFU_ORTHOLOGUE AFUA_6G10090)"/>
    <property type="match status" value="1"/>
</dbReference>
<dbReference type="Pfam" id="PF00389">
    <property type="entry name" value="2-Hacid_dh"/>
    <property type="match status" value="1"/>
</dbReference>
<dbReference type="Pfam" id="PF02826">
    <property type="entry name" value="2-Hacid_dh_C"/>
    <property type="match status" value="1"/>
</dbReference>
<dbReference type="SUPFAM" id="SSF52283">
    <property type="entry name" value="Formate/glycerate dehydrogenase catalytic domain-like"/>
    <property type="match status" value="1"/>
</dbReference>
<dbReference type="SUPFAM" id="SSF51735">
    <property type="entry name" value="NAD(P)-binding Rossmann-fold domains"/>
    <property type="match status" value="1"/>
</dbReference>
<comment type="similarity">
    <text evidence="2">Belongs to the D-isomer specific 2-hydroxyacid dehydrogenase family.</text>
</comment>
<organism>
    <name type="scientific">Staphylococcus aureus (strain Mu50 / ATCC 700699)</name>
    <dbReference type="NCBI Taxonomy" id="158878"/>
    <lineage>
        <taxon>Bacteria</taxon>
        <taxon>Bacillati</taxon>
        <taxon>Bacillota</taxon>
        <taxon>Bacilli</taxon>
        <taxon>Bacillales</taxon>
        <taxon>Staphylococcaceae</taxon>
        <taxon>Staphylococcus</taxon>
    </lineage>
</organism>
<proteinExistence type="inferred from homology"/>
<gene>
    <name type="ordered locus">SAV2305</name>
</gene>
<keyword id="KW-0520">NAD</keyword>
<keyword id="KW-0560">Oxidoreductase</keyword>
<sequence length="317" mass="34703">MEKVYVAGAIPEVGLKLLQEHFEVEMYEGKGLVDKDTLIKGVKNATALISLLSTNVDKDVIDAGKDLKIIANYGAGFNNIDIEYAREKSIDVTNTPKASTNATADLTIGLVLAVARRIVEGDQLSRTTGFDGWAPLFFRGREVSGKTIGIIGLGEIGSAVARRARAFDMDVLYTGPNRKEEKEREIGAKYVDLDTLLKNADFITINAAYNPKMHHLIDTEQFKMMKSTVYLINASRGPIVHEQALVQALKDNEIEGAALDVYEFEPDITDDLKSLNNVVLTPHIGNATFEARDMMSKIVANAAISAVQGEKPQFVVN</sequence>
<reference key="1">
    <citation type="journal article" date="2001" name="Lancet">
        <title>Whole genome sequencing of meticillin-resistant Staphylococcus aureus.</title>
        <authorList>
            <person name="Kuroda M."/>
            <person name="Ohta T."/>
            <person name="Uchiyama I."/>
            <person name="Baba T."/>
            <person name="Yuzawa H."/>
            <person name="Kobayashi I."/>
            <person name="Cui L."/>
            <person name="Oguchi A."/>
            <person name="Aoki K."/>
            <person name="Nagai Y."/>
            <person name="Lian J.-Q."/>
            <person name="Ito T."/>
            <person name="Kanamori M."/>
            <person name="Matsumaru H."/>
            <person name="Maruyama A."/>
            <person name="Murakami H."/>
            <person name="Hosoyama A."/>
            <person name="Mizutani-Ui Y."/>
            <person name="Takahashi N.K."/>
            <person name="Sawano T."/>
            <person name="Inoue R."/>
            <person name="Kaito C."/>
            <person name="Sekimizu K."/>
            <person name="Hirakawa H."/>
            <person name="Kuhara S."/>
            <person name="Goto S."/>
            <person name="Yabuzaki J."/>
            <person name="Kanehisa M."/>
            <person name="Yamashita A."/>
            <person name="Oshima K."/>
            <person name="Furuya K."/>
            <person name="Yoshino C."/>
            <person name="Shiba T."/>
            <person name="Hattori M."/>
            <person name="Ogasawara N."/>
            <person name="Hayashi H."/>
            <person name="Hiramatsu K."/>
        </authorList>
    </citation>
    <scope>NUCLEOTIDE SEQUENCE [LARGE SCALE GENOMIC DNA]</scope>
    <source>
        <strain>Mu50 / ATCC 700699</strain>
    </source>
</reference>